<name>TRX1_GAHVM</name>
<gene>
    <name evidence="1" type="primary">TRX1</name>
    <name type="ordered locus">MDV051</name>
</gene>
<reference key="1">
    <citation type="journal article" date="2000" name="J. Virol.">
        <title>The genome of a very virulent Marek's disease virus.</title>
        <authorList>
            <person name="Tulman E.R."/>
            <person name="Afonso C.L."/>
            <person name="Lu Z."/>
            <person name="Zsak L."/>
            <person name="Rock D.L."/>
            <person name="Kutish G.F."/>
        </authorList>
    </citation>
    <scope>NUCLEOTIDE SEQUENCE [LARGE SCALE GENOMIC DNA]</scope>
</reference>
<accession>Q9E6N1</accession>
<keyword id="KW-0167">Capsid protein</keyword>
<keyword id="KW-1048">Host nucleus</keyword>
<keyword id="KW-1185">Reference proteome</keyword>
<keyword id="KW-0946">Virion</keyword>
<proteinExistence type="inferred from homology"/>
<sequence length="470" mass="52856">MKPLLRSHETQYYSLYPDTLNGLHNVFRTIGNSVQSDTVRRLNLGYLDGDNRRGNLAGGLELLRDATTPNASRMNITRPLDTSTSGATAMIMQSLRTDVAENITLLTGDSRATISRQVTLTDFCFPDAEMPGLIILSIRHPLDINSEALYATPAGRDPRVMETVWYELSELAAVSVNRVNGSGVRPSLVSLSFLIAARASDYADKCGAEALRAHVISNYGRRRMEEKLDRFGICLITMLRCRVFPHRHFQLLGGLISWISQREIASITAVVRGPQESIKTEQTAMPRSSVYVPACAYIDFDKDIRVIHEERSSSSLYLVFVYTQKFGRETVRIYVMRSRLGEWAFREGLGYMYSGVRSNNAITGVDGLIVPHGANVNMEFPLTKTLDLRNRDRRLGIAARSRDLNKADWKVDLRGRPTKESCMYAAYCRLGHLDESSVPVKKFERCGSLDIPVIWIPGVIWNIGTWIECY</sequence>
<organism>
    <name type="scientific">Gallid herpesvirus 2 (strain Chicken/Md5/ATCC VR-987)</name>
    <name type="common">GaHV-2</name>
    <name type="synonym">Marek's disease herpesvirus type 1</name>
    <dbReference type="NCBI Taxonomy" id="10389"/>
    <lineage>
        <taxon>Viruses</taxon>
        <taxon>Duplodnaviria</taxon>
        <taxon>Heunggongvirae</taxon>
        <taxon>Peploviricota</taxon>
        <taxon>Herviviricetes</taxon>
        <taxon>Herpesvirales</taxon>
        <taxon>Orthoherpesviridae</taxon>
        <taxon>Alphaherpesvirinae</taxon>
        <taxon>Mardivirus</taxon>
        <taxon>Mardivirus gallidalpha2</taxon>
        <taxon>Gallid alphaherpesvirus 2</taxon>
    </lineage>
</organism>
<comment type="function">
    <text evidence="1">Structural component of the T=16 icosahedral capsid. The capsid is composed of pentamers and hexamers of major capsid protein/MCP, which are linked together by heterotrimers called triplexes. These triplexes are formed by a single molecule of triplex protein 1/TRX1 and two copies of triplex protein 2/TRX2. Additionally, TRX1 is required for efficient transport of TRX2 to the nucleus, which is the site of capsid assembly.</text>
</comment>
<comment type="subunit">
    <text evidence="1">Interacts with TRX2, MCP and capsid vertex component 2/CVC2.</text>
</comment>
<comment type="subcellular location">
    <subcellularLocation>
        <location evidence="1">Virion</location>
    </subcellularLocation>
    <subcellularLocation>
        <location evidence="1">Host nucleus</location>
    </subcellularLocation>
</comment>
<comment type="similarity">
    <text evidence="1">Belongs to the herpesviridae TRX1 protein family.</text>
</comment>
<dbReference type="EMBL" id="AF243438">
    <property type="protein sequence ID" value="AAG14231.1"/>
    <property type="molecule type" value="Genomic_DNA"/>
</dbReference>
<dbReference type="RefSeq" id="YP_001033967.1">
    <property type="nucleotide sequence ID" value="NC_002229.3"/>
</dbReference>
<dbReference type="SMR" id="Q9E6N1"/>
<dbReference type="GeneID" id="4811512"/>
<dbReference type="KEGG" id="vg:4811512"/>
<dbReference type="Proteomes" id="UP000008072">
    <property type="component" value="Segment"/>
</dbReference>
<dbReference type="GO" id="GO:0042025">
    <property type="term" value="C:host cell nucleus"/>
    <property type="evidence" value="ECO:0007669"/>
    <property type="project" value="UniProtKB-SubCell"/>
</dbReference>
<dbReference type="GO" id="GO:0019028">
    <property type="term" value="C:viral capsid"/>
    <property type="evidence" value="ECO:0007669"/>
    <property type="project" value="UniProtKB-KW"/>
</dbReference>
<dbReference type="GO" id="GO:0003677">
    <property type="term" value="F:DNA binding"/>
    <property type="evidence" value="ECO:0007669"/>
    <property type="project" value="InterPro"/>
</dbReference>
<dbReference type="GO" id="GO:0019069">
    <property type="term" value="P:viral capsid assembly"/>
    <property type="evidence" value="ECO:0007669"/>
    <property type="project" value="InterPro"/>
</dbReference>
<dbReference type="HAMAP" id="MF_04018">
    <property type="entry name" value="HSV_TRX1"/>
    <property type="match status" value="1"/>
</dbReference>
<dbReference type="InterPro" id="IPR004999">
    <property type="entry name" value="Herpes_1"/>
</dbReference>
<dbReference type="Pfam" id="PF03327">
    <property type="entry name" value="Herpes_VP19C"/>
    <property type="match status" value="1"/>
</dbReference>
<evidence type="ECO:0000255" key="1">
    <source>
        <dbReference type="HAMAP-Rule" id="MF_04018"/>
    </source>
</evidence>
<organismHost>
    <name type="scientific">Gallus gallus</name>
    <name type="common">Chicken</name>
    <dbReference type="NCBI Taxonomy" id="9031"/>
</organismHost>
<feature type="chain" id="PRO_0000406515" description="Triplex capsid protein 1">
    <location>
        <begin position="1"/>
        <end position="470"/>
    </location>
</feature>
<protein>
    <recommendedName>
        <fullName evidence="1">Triplex capsid protein 1</fullName>
    </recommendedName>
</protein>